<gene>
    <name evidence="1" type="primary">pepA</name>
    <name type="ordered locus">Acid_1288</name>
</gene>
<name>AMPA_SOLUE</name>
<accession>Q029J4</accession>
<organism>
    <name type="scientific">Solibacter usitatus (strain Ellin6076)</name>
    <dbReference type="NCBI Taxonomy" id="234267"/>
    <lineage>
        <taxon>Bacteria</taxon>
        <taxon>Pseudomonadati</taxon>
        <taxon>Acidobacteriota</taxon>
        <taxon>Terriglobia</taxon>
        <taxon>Bryobacterales</taxon>
        <taxon>Solibacteraceae</taxon>
        <taxon>Candidatus Solibacter</taxon>
    </lineage>
</organism>
<evidence type="ECO:0000255" key="1">
    <source>
        <dbReference type="HAMAP-Rule" id="MF_00181"/>
    </source>
</evidence>
<comment type="function">
    <text evidence="1">Presumably involved in the processing and regular turnover of intracellular proteins. Catalyzes the removal of unsubstituted N-terminal amino acids from various peptides.</text>
</comment>
<comment type="catalytic activity">
    <reaction evidence="1">
        <text>Release of an N-terminal amino acid, Xaa-|-Yaa-, in which Xaa is preferably Leu, but may be other amino acids including Pro although not Arg or Lys, and Yaa may be Pro. Amino acid amides and methyl esters are also readily hydrolyzed, but rates on arylamides are exceedingly low.</text>
        <dbReference type="EC" id="3.4.11.1"/>
    </reaction>
</comment>
<comment type="catalytic activity">
    <reaction evidence="1">
        <text>Release of an N-terminal amino acid, preferentially leucine, but not glutamic or aspartic acids.</text>
        <dbReference type="EC" id="3.4.11.10"/>
    </reaction>
</comment>
<comment type="cofactor">
    <cofactor evidence="1">
        <name>Mn(2+)</name>
        <dbReference type="ChEBI" id="CHEBI:29035"/>
    </cofactor>
    <text evidence="1">Binds 2 manganese ions per subunit.</text>
</comment>
<comment type="subcellular location">
    <subcellularLocation>
        <location evidence="1">Cytoplasm</location>
    </subcellularLocation>
</comment>
<comment type="similarity">
    <text evidence="1">Belongs to the peptidase M17 family.</text>
</comment>
<reference key="1">
    <citation type="journal article" date="2009" name="Appl. Environ. Microbiol.">
        <title>Three genomes from the phylum Acidobacteria provide insight into the lifestyles of these microorganisms in soils.</title>
        <authorList>
            <person name="Ward N.L."/>
            <person name="Challacombe J.F."/>
            <person name="Janssen P.H."/>
            <person name="Henrissat B."/>
            <person name="Coutinho P.M."/>
            <person name="Wu M."/>
            <person name="Xie G."/>
            <person name="Haft D.H."/>
            <person name="Sait M."/>
            <person name="Badger J."/>
            <person name="Barabote R.D."/>
            <person name="Bradley B."/>
            <person name="Brettin T.S."/>
            <person name="Brinkac L.M."/>
            <person name="Bruce D."/>
            <person name="Creasy T."/>
            <person name="Daugherty S.C."/>
            <person name="Davidsen T.M."/>
            <person name="DeBoy R.T."/>
            <person name="Detter J.C."/>
            <person name="Dodson R.J."/>
            <person name="Durkin A.S."/>
            <person name="Ganapathy A."/>
            <person name="Gwinn-Giglio M."/>
            <person name="Han C.S."/>
            <person name="Khouri H."/>
            <person name="Kiss H."/>
            <person name="Kothari S.P."/>
            <person name="Madupu R."/>
            <person name="Nelson K.E."/>
            <person name="Nelson W.C."/>
            <person name="Paulsen I."/>
            <person name="Penn K."/>
            <person name="Ren Q."/>
            <person name="Rosovitz M.J."/>
            <person name="Selengut J.D."/>
            <person name="Shrivastava S."/>
            <person name="Sullivan S.A."/>
            <person name="Tapia R."/>
            <person name="Thompson L.S."/>
            <person name="Watkins K.L."/>
            <person name="Yang Q."/>
            <person name="Yu C."/>
            <person name="Zafar N."/>
            <person name="Zhou L."/>
            <person name="Kuske C.R."/>
        </authorList>
    </citation>
    <scope>NUCLEOTIDE SEQUENCE [LARGE SCALE GENOMIC DNA]</scope>
    <source>
        <strain>Ellin6076</strain>
    </source>
</reference>
<protein>
    <recommendedName>
        <fullName evidence="1">Probable cytosol aminopeptidase</fullName>
        <ecNumber evidence="1">3.4.11.1</ecNumber>
    </recommendedName>
    <alternativeName>
        <fullName evidence="1">Leucine aminopeptidase</fullName>
        <shortName evidence="1">LAP</shortName>
        <ecNumber evidence="1">3.4.11.10</ecNumber>
    </alternativeName>
    <alternativeName>
        <fullName evidence="1">Leucyl aminopeptidase</fullName>
    </alternativeName>
</protein>
<keyword id="KW-0031">Aminopeptidase</keyword>
<keyword id="KW-0963">Cytoplasm</keyword>
<keyword id="KW-0378">Hydrolase</keyword>
<keyword id="KW-0464">Manganese</keyword>
<keyword id="KW-0479">Metal-binding</keyword>
<keyword id="KW-0645">Protease</keyword>
<sequence>MQITIERKPLGQIEADALIVPVFEGRRDARFGAEDLFASGEVAGKALEMTLLHHAPGVRATRVLLVGAGAAGKFDAAGMRRLSGAAVRFLKAKSVKKIALVLDSEFSGSNFASAAVEGALLGNFEPDRYKTGNEKKSLDTFIVAGDTPELESAVARGRILAEAQNFSRDLVNEPANLLTPLGMADAARKMAAEFGLECEVLDRDAMQKLGMGSLLGVAIGSAEPPVLIVLRYRPAKSEGAAHLGLVGKGVTFDTGGISIKPADGMEKMKYDMAGGAAMIGAMRAIAQLKPAIPVSAYIPAVENMPGSRAQRPGDIVTAMNGKTIEVINTDAEGRLILADALTYARRQGCTHLVDAATLTGAVVVALGHLNVGLFANDDAMRDRVLAAAKDEGERMWSLPLEDDYKEYLKSGFADIANVGGRWGGAITAAIFLKEFAEETPWVHLDIAGTAWLDENKPYLAKGPTGLPVRTLARLAMDWKA</sequence>
<feature type="chain" id="PRO_1000019986" description="Probable cytosol aminopeptidase">
    <location>
        <begin position="1"/>
        <end position="480"/>
    </location>
</feature>
<feature type="active site" evidence="1">
    <location>
        <position position="260"/>
    </location>
</feature>
<feature type="active site" evidence="1">
    <location>
        <position position="334"/>
    </location>
</feature>
<feature type="binding site" evidence="1">
    <location>
        <position position="248"/>
    </location>
    <ligand>
        <name>Mn(2+)</name>
        <dbReference type="ChEBI" id="CHEBI:29035"/>
        <label>2</label>
    </ligand>
</feature>
<feature type="binding site" evidence="1">
    <location>
        <position position="253"/>
    </location>
    <ligand>
        <name>Mn(2+)</name>
        <dbReference type="ChEBI" id="CHEBI:29035"/>
        <label>1</label>
    </ligand>
</feature>
<feature type="binding site" evidence="1">
    <location>
        <position position="253"/>
    </location>
    <ligand>
        <name>Mn(2+)</name>
        <dbReference type="ChEBI" id="CHEBI:29035"/>
        <label>2</label>
    </ligand>
</feature>
<feature type="binding site" evidence="1">
    <location>
        <position position="271"/>
    </location>
    <ligand>
        <name>Mn(2+)</name>
        <dbReference type="ChEBI" id="CHEBI:29035"/>
        <label>2</label>
    </ligand>
</feature>
<feature type="binding site" evidence="1">
    <location>
        <position position="330"/>
    </location>
    <ligand>
        <name>Mn(2+)</name>
        <dbReference type="ChEBI" id="CHEBI:29035"/>
        <label>1</label>
    </ligand>
</feature>
<feature type="binding site" evidence="1">
    <location>
        <position position="332"/>
    </location>
    <ligand>
        <name>Mn(2+)</name>
        <dbReference type="ChEBI" id="CHEBI:29035"/>
        <label>1</label>
    </ligand>
</feature>
<feature type="binding site" evidence="1">
    <location>
        <position position="332"/>
    </location>
    <ligand>
        <name>Mn(2+)</name>
        <dbReference type="ChEBI" id="CHEBI:29035"/>
        <label>2</label>
    </ligand>
</feature>
<dbReference type="EC" id="3.4.11.1" evidence="1"/>
<dbReference type="EC" id="3.4.11.10" evidence="1"/>
<dbReference type="EMBL" id="CP000473">
    <property type="protein sequence ID" value="ABJ82282.1"/>
    <property type="molecule type" value="Genomic_DNA"/>
</dbReference>
<dbReference type="SMR" id="Q029J4"/>
<dbReference type="FunCoup" id="Q029J4">
    <property type="interactions" value="493"/>
</dbReference>
<dbReference type="STRING" id="234267.Acid_1288"/>
<dbReference type="KEGG" id="sus:Acid_1288"/>
<dbReference type="eggNOG" id="COG0260">
    <property type="taxonomic scope" value="Bacteria"/>
</dbReference>
<dbReference type="HOGENOM" id="CLU_013734_2_2_0"/>
<dbReference type="InParanoid" id="Q029J4"/>
<dbReference type="OrthoDB" id="9809354at2"/>
<dbReference type="GO" id="GO:0005737">
    <property type="term" value="C:cytoplasm"/>
    <property type="evidence" value="ECO:0007669"/>
    <property type="project" value="UniProtKB-SubCell"/>
</dbReference>
<dbReference type="GO" id="GO:0030145">
    <property type="term" value="F:manganese ion binding"/>
    <property type="evidence" value="ECO:0007669"/>
    <property type="project" value="UniProtKB-UniRule"/>
</dbReference>
<dbReference type="GO" id="GO:0070006">
    <property type="term" value="F:metalloaminopeptidase activity"/>
    <property type="evidence" value="ECO:0007669"/>
    <property type="project" value="InterPro"/>
</dbReference>
<dbReference type="GO" id="GO:0006508">
    <property type="term" value="P:proteolysis"/>
    <property type="evidence" value="ECO:0007669"/>
    <property type="project" value="UniProtKB-KW"/>
</dbReference>
<dbReference type="CDD" id="cd00433">
    <property type="entry name" value="Peptidase_M17"/>
    <property type="match status" value="1"/>
</dbReference>
<dbReference type="Gene3D" id="3.40.220.10">
    <property type="entry name" value="Leucine Aminopeptidase, subunit E, domain 1"/>
    <property type="match status" value="1"/>
</dbReference>
<dbReference type="Gene3D" id="3.40.630.10">
    <property type="entry name" value="Zn peptidases"/>
    <property type="match status" value="1"/>
</dbReference>
<dbReference type="HAMAP" id="MF_00181">
    <property type="entry name" value="Cytosol_peptidase_M17"/>
    <property type="match status" value="1"/>
</dbReference>
<dbReference type="InterPro" id="IPR011356">
    <property type="entry name" value="Leucine_aapep/pepB"/>
</dbReference>
<dbReference type="InterPro" id="IPR043472">
    <property type="entry name" value="Macro_dom-like"/>
</dbReference>
<dbReference type="InterPro" id="IPR000819">
    <property type="entry name" value="Peptidase_M17_C"/>
</dbReference>
<dbReference type="InterPro" id="IPR023042">
    <property type="entry name" value="Peptidase_M17_leu_NH2_pept"/>
</dbReference>
<dbReference type="InterPro" id="IPR008283">
    <property type="entry name" value="Peptidase_M17_N"/>
</dbReference>
<dbReference type="NCBIfam" id="NF002073">
    <property type="entry name" value="PRK00913.1-2"/>
    <property type="match status" value="1"/>
</dbReference>
<dbReference type="NCBIfam" id="NF002074">
    <property type="entry name" value="PRK00913.1-4"/>
    <property type="match status" value="1"/>
</dbReference>
<dbReference type="NCBIfam" id="NF002077">
    <property type="entry name" value="PRK00913.2-4"/>
    <property type="match status" value="1"/>
</dbReference>
<dbReference type="NCBIfam" id="NF002083">
    <property type="entry name" value="PRK00913.3-5"/>
    <property type="match status" value="1"/>
</dbReference>
<dbReference type="PANTHER" id="PTHR11963:SF23">
    <property type="entry name" value="CYTOSOL AMINOPEPTIDASE"/>
    <property type="match status" value="1"/>
</dbReference>
<dbReference type="PANTHER" id="PTHR11963">
    <property type="entry name" value="LEUCINE AMINOPEPTIDASE-RELATED"/>
    <property type="match status" value="1"/>
</dbReference>
<dbReference type="Pfam" id="PF00883">
    <property type="entry name" value="Peptidase_M17"/>
    <property type="match status" value="1"/>
</dbReference>
<dbReference type="Pfam" id="PF02789">
    <property type="entry name" value="Peptidase_M17_N"/>
    <property type="match status" value="1"/>
</dbReference>
<dbReference type="PRINTS" id="PR00481">
    <property type="entry name" value="LAMNOPPTDASE"/>
</dbReference>
<dbReference type="SUPFAM" id="SSF52949">
    <property type="entry name" value="Macro domain-like"/>
    <property type="match status" value="1"/>
</dbReference>
<dbReference type="SUPFAM" id="SSF53187">
    <property type="entry name" value="Zn-dependent exopeptidases"/>
    <property type="match status" value="1"/>
</dbReference>
<dbReference type="PROSITE" id="PS00631">
    <property type="entry name" value="CYTOSOL_AP"/>
    <property type="match status" value="1"/>
</dbReference>
<proteinExistence type="inferred from homology"/>